<name>MPI_CAEEL</name>
<gene>
    <name type="ORF">ZK632.4</name>
</gene>
<dbReference type="EC" id="5.3.1.8"/>
<dbReference type="EMBL" id="Z22181">
    <property type="protein sequence ID" value="CAA80181.3"/>
    <property type="molecule type" value="Genomic_DNA"/>
</dbReference>
<dbReference type="PIR" id="S40936">
    <property type="entry name" value="S40936"/>
</dbReference>
<dbReference type="RefSeq" id="NP_499174.3">
    <property type="nucleotide sequence ID" value="NM_066773.4"/>
</dbReference>
<dbReference type="SMR" id="P34650"/>
<dbReference type="BioGRID" id="41582">
    <property type="interactions" value="6"/>
</dbReference>
<dbReference type="FunCoup" id="P34650">
    <property type="interactions" value="2108"/>
</dbReference>
<dbReference type="STRING" id="6239.ZK632.4.1"/>
<dbReference type="PaxDb" id="6239-ZK632.4"/>
<dbReference type="PeptideAtlas" id="P34650"/>
<dbReference type="EnsemblMetazoa" id="ZK632.4.1">
    <property type="protein sequence ID" value="ZK632.4.1"/>
    <property type="gene ID" value="WBGene00014013"/>
</dbReference>
<dbReference type="GeneID" id="176388"/>
<dbReference type="KEGG" id="cel:CELE_ZK632.4"/>
<dbReference type="UCSC" id="ZK632.4">
    <property type="organism name" value="c. elegans"/>
</dbReference>
<dbReference type="AGR" id="WB:WBGene00014013"/>
<dbReference type="CTD" id="176388"/>
<dbReference type="WormBase" id="ZK632.4">
    <property type="protein sequence ID" value="CE36417"/>
    <property type="gene ID" value="WBGene00014013"/>
</dbReference>
<dbReference type="eggNOG" id="KOG2757">
    <property type="taxonomic scope" value="Eukaryota"/>
</dbReference>
<dbReference type="GeneTree" id="ENSGT00390000016075"/>
<dbReference type="HOGENOM" id="CLU_026967_2_1_1"/>
<dbReference type="InParanoid" id="P34650"/>
<dbReference type="OMA" id="EFAACIS"/>
<dbReference type="OrthoDB" id="6605218at2759"/>
<dbReference type="PhylomeDB" id="P34650"/>
<dbReference type="Reactome" id="R-CEL-446205">
    <property type="pathway name" value="Synthesis of GDP-mannose"/>
</dbReference>
<dbReference type="UniPathway" id="UPA00126">
    <property type="reaction ID" value="UER00423"/>
</dbReference>
<dbReference type="PRO" id="PR:P34650"/>
<dbReference type="Proteomes" id="UP000001940">
    <property type="component" value="Chromosome III"/>
</dbReference>
<dbReference type="Bgee" id="WBGene00014013">
    <property type="expression patterns" value="Expressed in germ line (C elegans) and 4 other cell types or tissues"/>
</dbReference>
<dbReference type="GO" id="GO:0005829">
    <property type="term" value="C:cytosol"/>
    <property type="evidence" value="ECO:0000318"/>
    <property type="project" value="GO_Central"/>
</dbReference>
<dbReference type="GO" id="GO:0004476">
    <property type="term" value="F:mannose-6-phosphate isomerase activity"/>
    <property type="evidence" value="ECO:0000318"/>
    <property type="project" value="GO_Central"/>
</dbReference>
<dbReference type="GO" id="GO:0008270">
    <property type="term" value="F:zinc ion binding"/>
    <property type="evidence" value="ECO:0007669"/>
    <property type="project" value="InterPro"/>
</dbReference>
<dbReference type="GO" id="GO:0005975">
    <property type="term" value="P:carbohydrate metabolic process"/>
    <property type="evidence" value="ECO:0007669"/>
    <property type="project" value="InterPro"/>
</dbReference>
<dbReference type="GO" id="GO:0009298">
    <property type="term" value="P:GDP-mannose biosynthetic process"/>
    <property type="evidence" value="ECO:0000318"/>
    <property type="project" value="GO_Central"/>
</dbReference>
<dbReference type="CDD" id="cd07011">
    <property type="entry name" value="cupin_PMI_type_I_N"/>
    <property type="match status" value="1"/>
</dbReference>
<dbReference type="Gene3D" id="2.60.120.10">
    <property type="entry name" value="Jelly Rolls"/>
    <property type="match status" value="2"/>
</dbReference>
<dbReference type="Gene3D" id="1.10.441.10">
    <property type="entry name" value="Phosphomannose Isomerase, domain 2"/>
    <property type="match status" value="1"/>
</dbReference>
<dbReference type="InterPro" id="IPR001250">
    <property type="entry name" value="Man6P_Isoase-1"/>
</dbReference>
<dbReference type="InterPro" id="IPR016305">
    <property type="entry name" value="Mannose-6-P_Isomerase"/>
</dbReference>
<dbReference type="InterPro" id="IPR018050">
    <property type="entry name" value="Pmannose_isomerase-type1_CS"/>
</dbReference>
<dbReference type="InterPro" id="IPR046456">
    <property type="entry name" value="PMI_typeI_C"/>
</dbReference>
<dbReference type="InterPro" id="IPR046457">
    <property type="entry name" value="PMI_typeI_cat"/>
</dbReference>
<dbReference type="InterPro" id="IPR046458">
    <property type="entry name" value="PMI_typeI_hel"/>
</dbReference>
<dbReference type="InterPro" id="IPR014710">
    <property type="entry name" value="RmlC-like_jellyroll"/>
</dbReference>
<dbReference type="InterPro" id="IPR011051">
    <property type="entry name" value="RmlC_Cupin_sf"/>
</dbReference>
<dbReference type="NCBIfam" id="TIGR00218">
    <property type="entry name" value="manA"/>
    <property type="match status" value="1"/>
</dbReference>
<dbReference type="PANTHER" id="PTHR10309">
    <property type="entry name" value="MANNOSE-6-PHOSPHATE ISOMERASE"/>
    <property type="match status" value="1"/>
</dbReference>
<dbReference type="PANTHER" id="PTHR10309:SF0">
    <property type="entry name" value="MANNOSE-6-PHOSPHATE ISOMERASE"/>
    <property type="match status" value="1"/>
</dbReference>
<dbReference type="Pfam" id="PF01238">
    <property type="entry name" value="PMI_typeI_C"/>
    <property type="match status" value="1"/>
</dbReference>
<dbReference type="Pfam" id="PF20511">
    <property type="entry name" value="PMI_typeI_cat"/>
    <property type="match status" value="1"/>
</dbReference>
<dbReference type="Pfam" id="PF20512">
    <property type="entry name" value="PMI_typeI_hel"/>
    <property type="match status" value="1"/>
</dbReference>
<dbReference type="PIRSF" id="PIRSF001480">
    <property type="entry name" value="Mannose-6-phosphate_isomerase"/>
    <property type="match status" value="1"/>
</dbReference>
<dbReference type="PRINTS" id="PR00714">
    <property type="entry name" value="MAN6PISMRASE"/>
</dbReference>
<dbReference type="SUPFAM" id="SSF51182">
    <property type="entry name" value="RmlC-like cupins"/>
    <property type="match status" value="1"/>
</dbReference>
<dbReference type="PROSITE" id="PS00965">
    <property type="entry name" value="PMI_I_1"/>
    <property type="match status" value="1"/>
</dbReference>
<dbReference type="PROSITE" id="PS00966">
    <property type="entry name" value="PMI_I_2"/>
    <property type="match status" value="1"/>
</dbReference>
<accession>P34650</accession>
<evidence type="ECO:0000250" key="1"/>
<evidence type="ECO:0000305" key="2"/>
<feature type="chain" id="PRO_0000194233" description="Probable mannose-6-phosphate isomerase">
    <location>
        <begin position="1"/>
        <end position="416"/>
    </location>
</feature>
<feature type="active site" evidence="1">
    <location>
        <position position="278"/>
    </location>
</feature>
<feature type="binding site" evidence="1">
    <location>
        <position position="99"/>
    </location>
    <ligand>
        <name>Zn(2+)</name>
        <dbReference type="ChEBI" id="CHEBI:29105"/>
    </ligand>
</feature>
<feature type="binding site" evidence="1">
    <location>
        <position position="101"/>
    </location>
    <ligand>
        <name>Zn(2+)</name>
        <dbReference type="ChEBI" id="CHEBI:29105"/>
    </ligand>
</feature>
<feature type="binding site" evidence="1">
    <location>
        <position position="126"/>
    </location>
    <ligand>
        <name>Zn(2+)</name>
        <dbReference type="ChEBI" id="CHEBI:29105"/>
    </ligand>
</feature>
<feature type="binding site" evidence="1">
    <location>
        <position position="259"/>
    </location>
    <ligand>
        <name>Zn(2+)</name>
        <dbReference type="ChEBI" id="CHEBI:29105"/>
    </ligand>
</feature>
<proteinExistence type="inferred from homology"/>
<sequence>MLLKLKCTVNNYAWGPKGNSSMAGSLALDGGHIPNLDKDKPYAEFWVGTHANGPAHVIEKDIALKQLLATSPELQGKHEKGNLSFLFKVLSVLGPLSIQIHPTKEQGKLLHATDPKNYPDDNHKPEIAIALTEFELLSGFRQHSQISEYLKLYSEIQELLTEEEKSQIDSLGSYGESSAQVLKKIFSRIWRTPKEKLQIVVDKLARRIQGHENKTALDEIIVYLFTLYPGDVGVFAPIFLNYFKLQPGEATFLEPNMPHAYLKGDCVECMADSDNTIRAGLTPKYIDVESLVEMLNYDETLLPKYIPNELDDGSLLFTPRGIDEFWVQEVKGPAGSIYQLPYSESCSVLTVLYGTATVTLGDASQVLNRGEVVFIGATHDAERPKINISDDFLAFRAFTPSPRALESLSNKRLIID</sequence>
<reference key="1">
    <citation type="journal article" date="1994" name="Nature">
        <title>2.2 Mb of contiguous nucleotide sequence from chromosome III of C. elegans.</title>
        <authorList>
            <person name="Wilson R."/>
            <person name="Ainscough R."/>
            <person name="Anderson K."/>
            <person name="Baynes C."/>
            <person name="Berks M."/>
            <person name="Bonfield J."/>
            <person name="Burton J."/>
            <person name="Connell M."/>
            <person name="Copsey T."/>
            <person name="Cooper J."/>
            <person name="Coulson A."/>
            <person name="Craxton M."/>
            <person name="Dear S."/>
            <person name="Du Z."/>
            <person name="Durbin R."/>
            <person name="Favello A."/>
            <person name="Fraser A."/>
            <person name="Fulton L."/>
            <person name="Gardner A."/>
            <person name="Green P."/>
            <person name="Hawkins T."/>
            <person name="Hillier L."/>
            <person name="Jier M."/>
            <person name="Johnston L."/>
            <person name="Jones M."/>
            <person name="Kershaw J."/>
            <person name="Kirsten J."/>
            <person name="Laisster N."/>
            <person name="Latreille P."/>
            <person name="Lightning J."/>
            <person name="Lloyd C."/>
            <person name="Mortimore B."/>
            <person name="O'Callaghan M."/>
            <person name="Parsons J."/>
            <person name="Percy C."/>
            <person name="Rifken L."/>
            <person name="Roopra A."/>
            <person name="Saunders D."/>
            <person name="Shownkeen R."/>
            <person name="Sims M."/>
            <person name="Smaldon N."/>
            <person name="Smith A."/>
            <person name="Smith M."/>
            <person name="Sonnhammer E."/>
            <person name="Staden R."/>
            <person name="Sulston J."/>
            <person name="Thierry-Mieg J."/>
            <person name="Thomas K."/>
            <person name="Vaudin M."/>
            <person name="Vaughan K."/>
            <person name="Waterston R."/>
            <person name="Watson A."/>
            <person name="Weinstock L."/>
            <person name="Wilkinson-Sproat J."/>
            <person name="Wohldman P."/>
        </authorList>
    </citation>
    <scope>NUCLEOTIDE SEQUENCE [LARGE SCALE GENOMIC DNA]</scope>
    <source>
        <strain>Bristol N2</strain>
    </source>
</reference>
<reference key="2">
    <citation type="journal article" date="1998" name="Science">
        <title>Genome sequence of the nematode C. elegans: a platform for investigating biology.</title>
        <authorList>
            <consortium name="The C. elegans sequencing consortium"/>
        </authorList>
    </citation>
    <scope>NUCLEOTIDE SEQUENCE [LARGE SCALE GENOMIC DNA]</scope>
    <source>
        <strain>Bristol N2</strain>
    </source>
</reference>
<keyword id="KW-0963">Cytoplasm</keyword>
<keyword id="KW-0413">Isomerase</keyword>
<keyword id="KW-0479">Metal-binding</keyword>
<keyword id="KW-1185">Reference proteome</keyword>
<keyword id="KW-0862">Zinc</keyword>
<protein>
    <recommendedName>
        <fullName>Probable mannose-6-phosphate isomerase</fullName>
        <ecNumber>5.3.1.8</ecNumber>
    </recommendedName>
    <alternativeName>
        <fullName>Phosphohexomutase</fullName>
    </alternativeName>
    <alternativeName>
        <fullName>Phosphomannose isomerase</fullName>
        <shortName>PMI</shortName>
    </alternativeName>
</protein>
<comment type="function">
    <text evidence="1">Involved in the synthesis of the GDP-mannose and dolichol-phosphate-mannose required for a number of critical mannosyl transfer reactions.</text>
</comment>
<comment type="catalytic activity">
    <reaction>
        <text>D-mannose 6-phosphate = D-fructose 6-phosphate</text>
        <dbReference type="Rhea" id="RHEA:12356"/>
        <dbReference type="ChEBI" id="CHEBI:58735"/>
        <dbReference type="ChEBI" id="CHEBI:61527"/>
        <dbReference type="EC" id="5.3.1.8"/>
    </reaction>
</comment>
<comment type="cofactor">
    <cofactor evidence="1">
        <name>Zn(2+)</name>
        <dbReference type="ChEBI" id="CHEBI:29105"/>
    </cofactor>
    <text evidence="1">Binds 1 zinc ion per subunit.</text>
</comment>
<comment type="pathway">
    <text>Nucleotide-sugar biosynthesis; GDP-alpha-D-mannose biosynthesis; alpha-D-mannose 1-phosphate from D-fructose 6-phosphate: step 1/2.</text>
</comment>
<comment type="subcellular location">
    <subcellularLocation>
        <location evidence="1">Cytoplasm</location>
    </subcellularLocation>
</comment>
<comment type="similarity">
    <text evidence="2">Belongs to the mannose-6-phosphate isomerase type 1 family.</text>
</comment>
<organism>
    <name type="scientific">Caenorhabditis elegans</name>
    <dbReference type="NCBI Taxonomy" id="6239"/>
    <lineage>
        <taxon>Eukaryota</taxon>
        <taxon>Metazoa</taxon>
        <taxon>Ecdysozoa</taxon>
        <taxon>Nematoda</taxon>
        <taxon>Chromadorea</taxon>
        <taxon>Rhabditida</taxon>
        <taxon>Rhabditina</taxon>
        <taxon>Rhabditomorpha</taxon>
        <taxon>Rhabditoidea</taxon>
        <taxon>Rhabditidae</taxon>
        <taxon>Peloderinae</taxon>
        <taxon>Caenorhabditis</taxon>
    </lineage>
</organism>